<name>PRMA_CLOK5</name>
<evidence type="ECO:0000255" key="1">
    <source>
        <dbReference type="HAMAP-Rule" id="MF_00735"/>
    </source>
</evidence>
<keyword id="KW-0963">Cytoplasm</keyword>
<keyword id="KW-0489">Methyltransferase</keyword>
<keyword id="KW-1185">Reference proteome</keyword>
<keyword id="KW-0949">S-adenosyl-L-methionine</keyword>
<keyword id="KW-0808">Transferase</keyword>
<reference key="1">
    <citation type="journal article" date="2008" name="Proc. Natl. Acad. Sci. U.S.A.">
        <title>The genome of Clostridium kluyveri, a strict anaerobe with unique metabolic features.</title>
        <authorList>
            <person name="Seedorf H."/>
            <person name="Fricke W.F."/>
            <person name="Veith B."/>
            <person name="Brueggemann H."/>
            <person name="Liesegang H."/>
            <person name="Strittmatter A."/>
            <person name="Miethke M."/>
            <person name="Buckel W."/>
            <person name="Hinderberger J."/>
            <person name="Li F."/>
            <person name="Hagemeier C."/>
            <person name="Thauer R.K."/>
            <person name="Gottschalk G."/>
        </authorList>
    </citation>
    <scope>NUCLEOTIDE SEQUENCE [LARGE SCALE GENOMIC DNA]</scope>
    <source>
        <strain>ATCC 8527 / DSM 555 / NBRC 12016 / NCIMB 10680 / K1</strain>
    </source>
</reference>
<protein>
    <recommendedName>
        <fullName evidence="1">Ribosomal protein L11 methyltransferase</fullName>
        <shortName evidence="1">L11 Mtase</shortName>
        <ecNumber evidence="1">2.1.1.-</ecNumber>
    </recommendedName>
</protein>
<dbReference type="EC" id="2.1.1.-" evidence="1"/>
<dbReference type="EMBL" id="CP000673">
    <property type="protein sequence ID" value="EDK32955.1"/>
    <property type="molecule type" value="Genomic_DNA"/>
</dbReference>
<dbReference type="RefSeq" id="WP_012101284.1">
    <property type="nucleotide sequence ID" value="NC_009706.1"/>
</dbReference>
<dbReference type="SMR" id="A5N6M4"/>
<dbReference type="STRING" id="431943.CKL_0904"/>
<dbReference type="KEGG" id="ckl:CKL_0904"/>
<dbReference type="eggNOG" id="COG2264">
    <property type="taxonomic scope" value="Bacteria"/>
</dbReference>
<dbReference type="HOGENOM" id="CLU_049382_0_1_9"/>
<dbReference type="Proteomes" id="UP000002411">
    <property type="component" value="Chromosome"/>
</dbReference>
<dbReference type="GO" id="GO:0005737">
    <property type="term" value="C:cytoplasm"/>
    <property type="evidence" value="ECO:0007669"/>
    <property type="project" value="UniProtKB-SubCell"/>
</dbReference>
<dbReference type="GO" id="GO:0016279">
    <property type="term" value="F:protein-lysine N-methyltransferase activity"/>
    <property type="evidence" value="ECO:0007669"/>
    <property type="project" value="RHEA"/>
</dbReference>
<dbReference type="GO" id="GO:0032259">
    <property type="term" value="P:methylation"/>
    <property type="evidence" value="ECO:0007669"/>
    <property type="project" value="UniProtKB-KW"/>
</dbReference>
<dbReference type="CDD" id="cd02440">
    <property type="entry name" value="AdoMet_MTases"/>
    <property type="match status" value="1"/>
</dbReference>
<dbReference type="Gene3D" id="3.40.50.150">
    <property type="entry name" value="Vaccinia Virus protein VP39"/>
    <property type="match status" value="1"/>
</dbReference>
<dbReference type="HAMAP" id="MF_00735">
    <property type="entry name" value="Methyltr_PrmA"/>
    <property type="match status" value="1"/>
</dbReference>
<dbReference type="InterPro" id="IPR050078">
    <property type="entry name" value="Ribosomal_L11_MeTrfase_PrmA"/>
</dbReference>
<dbReference type="InterPro" id="IPR004498">
    <property type="entry name" value="Ribosomal_PrmA_MeTrfase"/>
</dbReference>
<dbReference type="InterPro" id="IPR029063">
    <property type="entry name" value="SAM-dependent_MTases_sf"/>
</dbReference>
<dbReference type="NCBIfam" id="TIGR00406">
    <property type="entry name" value="prmA"/>
    <property type="match status" value="1"/>
</dbReference>
<dbReference type="PANTHER" id="PTHR43648">
    <property type="entry name" value="ELECTRON TRANSFER FLAVOPROTEIN BETA SUBUNIT LYSINE METHYLTRANSFERASE"/>
    <property type="match status" value="1"/>
</dbReference>
<dbReference type="PANTHER" id="PTHR43648:SF1">
    <property type="entry name" value="ELECTRON TRANSFER FLAVOPROTEIN BETA SUBUNIT LYSINE METHYLTRANSFERASE"/>
    <property type="match status" value="1"/>
</dbReference>
<dbReference type="Pfam" id="PF06325">
    <property type="entry name" value="PrmA"/>
    <property type="match status" value="1"/>
</dbReference>
<dbReference type="PIRSF" id="PIRSF000401">
    <property type="entry name" value="RPL11_MTase"/>
    <property type="match status" value="1"/>
</dbReference>
<dbReference type="SUPFAM" id="SSF53335">
    <property type="entry name" value="S-adenosyl-L-methionine-dependent methyltransferases"/>
    <property type="match status" value="1"/>
</dbReference>
<accession>A5N6M4</accession>
<feature type="chain" id="PRO_1000083350" description="Ribosomal protein L11 methyltransferase">
    <location>
        <begin position="1"/>
        <end position="312"/>
    </location>
</feature>
<feature type="binding site" evidence="1">
    <location>
        <position position="163"/>
    </location>
    <ligand>
        <name>S-adenosyl-L-methionine</name>
        <dbReference type="ChEBI" id="CHEBI:59789"/>
    </ligand>
</feature>
<feature type="binding site" evidence="1">
    <location>
        <position position="184"/>
    </location>
    <ligand>
        <name>S-adenosyl-L-methionine</name>
        <dbReference type="ChEBI" id="CHEBI:59789"/>
    </ligand>
</feature>
<feature type="binding site" evidence="1">
    <location>
        <position position="206"/>
    </location>
    <ligand>
        <name>S-adenosyl-L-methionine</name>
        <dbReference type="ChEBI" id="CHEBI:59789"/>
    </ligand>
</feature>
<feature type="binding site" evidence="1">
    <location>
        <position position="248"/>
    </location>
    <ligand>
        <name>S-adenosyl-L-methionine</name>
        <dbReference type="ChEBI" id="CHEBI:59789"/>
    </ligand>
</feature>
<proteinExistence type="inferred from homology"/>
<gene>
    <name evidence="1" type="primary">prmA</name>
    <name type="ordered locus">CKL_0904</name>
</gene>
<comment type="function">
    <text evidence="1">Methylates ribosomal protein L11.</text>
</comment>
<comment type="catalytic activity">
    <reaction evidence="1">
        <text>L-lysyl-[protein] + 3 S-adenosyl-L-methionine = N(6),N(6),N(6)-trimethyl-L-lysyl-[protein] + 3 S-adenosyl-L-homocysteine + 3 H(+)</text>
        <dbReference type="Rhea" id="RHEA:54192"/>
        <dbReference type="Rhea" id="RHEA-COMP:9752"/>
        <dbReference type="Rhea" id="RHEA-COMP:13826"/>
        <dbReference type="ChEBI" id="CHEBI:15378"/>
        <dbReference type="ChEBI" id="CHEBI:29969"/>
        <dbReference type="ChEBI" id="CHEBI:57856"/>
        <dbReference type="ChEBI" id="CHEBI:59789"/>
        <dbReference type="ChEBI" id="CHEBI:61961"/>
    </reaction>
</comment>
<comment type="subcellular location">
    <subcellularLocation>
        <location evidence="1">Cytoplasm</location>
    </subcellularLocation>
</comment>
<comment type="similarity">
    <text evidence="1">Belongs to the methyltransferase superfamily. PrmA family.</text>
</comment>
<organism>
    <name type="scientific">Clostridium kluyveri (strain ATCC 8527 / DSM 555 / NBRC 12016 / NCIMB 10680 / K1)</name>
    <dbReference type="NCBI Taxonomy" id="431943"/>
    <lineage>
        <taxon>Bacteria</taxon>
        <taxon>Bacillati</taxon>
        <taxon>Bacillota</taxon>
        <taxon>Clostridia</taxon>
        <taxon>Eubacteriales</taxon>
        <taxon>Clostridiaceae</taxon>
        <taxon>Clostridium</taxon>
    </lineage>
</organism>
<sequence>MSKEWIEVSIIVSSEAVEAVSGILYNTEVEGISIEDTKDIEFKKKHPGDWDYFDESLLKVEEGAVIKAYYRESESFYGYLKYIRHNINNLENLGIDKGKGLVVVNKVNEEDWENGWKKYYKPYRAGEKIVIKPLWEEYENKKQDIVVEIDPGMAFGTGTHETTKMCIKALEKYVRPESNVFDIGTGSGILAIAASKLGAKEVTAVDLDPVAVESALKNISYNNIKNIKVFHGNLMEGVHGKADILVINIIADVILSLTEEVKKFLVSEGIFISSGIIIDRKEEVVENLQNNGFCIREINEDGEWVCIVSTIK</sequence>